<feature type="chain" id="PRO_0000283251" description="Putative F-box/kelch-repeat protein At4g34170">
    <location>
        <begin position="1"/>
        <end position="293"/>
    </location>
</feature>
<feature type="domain" description="F-box">
    <location>
        <begin position="9"/>
        <end position="55"/>
    </location>
</feature>
<feature type="repeat" description="Kelch 1">
    <location>
        <begin position="94"/>
        <end position="140"/>
    </location>
</feature>
<feature type="repeat" description="Kelch 2">
    <location>
        <begin position="141"/>
        <end position="187"/>
    </location>
</feature>
<feature type="repeat" description="Kelch 3">
    <location>
        <begin position="226"/>
        <end position="272"/>
    </location>
</feature>
<accession>O49488</accession>
<protein>
    <recommendedName>
        <fullName>Putative F-box/kelch-repeat protein At4g34170</fullName>
    </recommendedName>
</protein>
<name>FBK93_ARATH</name>
<sequence>MDDGEELPVKTMLMLHDDLILNCLARVSRSNHPTLSLVCKRFHSLLASVELYQTRTLLGRTERCFYRQYSSRKILVQILSPNSTSAGIAVVGPNIDAIGGGIKSNTLSSVMVMDSRSHTWREAPSMRVPRMFPSVCTLDGKIYVMGGCDNLDSTNWMEVFDTKTQTWEFLQIPSEEIFGGSAYESVRYEGTVYVWSEKKDVTYKLHEGRWSAADMSANGWGWPGSSYCVIENVLYSCFVHKIRWYDPKERVWTPLKGLPSLPCNGHVKLADYGEKMVILWEKYVDVDEKKMIW</sequence>
<keyword id="KW-0880">Kelch repeat</keyword>
<keyword id="KW-1185">Reference proteome</keyword>
<keyword id="KW-0677">Repeat</keyword>
<gene>
    <name type="ordered locus">At4g34170</name>
    <name type="ORF">F10M10.1</name>
</gene>
<proteinExistence type="predicted"/>
<reference key="1">
    <citation type="journal article" date="1999" name="Nature">
        <title>Sequence and analysis of chromosome 4 of the plant Arabidopsis thaliana.</title>
        <authorList>
            <person name="Mayer K.F.X."/>
            <person name="Schueller C."/>
            <person name="Wambutt R."/>
            <person name="Murphy G."/>
            <person name="Volckaert G."/>
            <person name="Pohl T."/>
            <person name="Duesterhoeft A."/>
            <person name="Stiekema W."/>
            <person name="Entian K.-D."/>
            <person name="Terryn N."/>
            <person name="Harris B."/>
            <person name="Ansorge W."/>
            <person name="Brandt P."/>
            <person name="Grivell L.A."/>
            <person name="Rieger M."/>
            <person name="Weichselgartner M."/>
            <person name="de Simone V."/>
            <person name="Obermaier B."/>
            <person name="Mache R."/>
            <person name="Mueller M."/>
            <person name="Kreis M."/>
            <person name="Delseny M."/>
            <person name="Puigdomenech P."/>
            <person name="Watson M."/>
            <person name="Schmidtheini T."/>
            <person name="Reichert B."/>
            <person name="Portetelle D."/>
            <person name="Perez-Alonso M."/>
            <person name="Boutry M."/>
            <person name="Bancroft I."/>
            <person name="Vos P."/>
            <person name="Hoheisel J."/>
            <person name="Zimmermann W."/>
            <person name="Wedler H."/>
            <person name="Ridley P."/>
            <person name="Langham S.-A."/>
            <person name="McCullagh B."/>
            <person name="Bilham L."/>
            <person name="Robben J."/>
            <person name="van der Schueren J."/>
            <person name="Grymonprez B."/>
            <person name="Chuang Y.-J."/>
            <person name="Vandenbussche F."/>
            <person name="Braeken M."/>
            <person name="Weltjens I."/>
            <person name="Voet M."/>
            <person name="Bastiaens I."/>
            <person name="Aert R."/>
            <person name="Defoor E."/>
            <person name="Weitzenegger T."/>
            <person name="Bothe G."/>
            <person name="Ramsperger U."/>
            <person name="Hilbert H."/>
            <person name="Braun M."/>
            <person name="Holzer E."/>
            <person name="Brandt A."/>
            <person name="Peters S."/>
            <person name="van Staveren M."/>
            <person name="Dirkse W."/>
            <person name="Mooijman P."/>
            <person name="Klein Lankhorst R."/>
            <person name="Rose M."/>
            <person name="Hauf J."/>
            <person name="Koetter P."/>
            <person name="Berneiser S."/>
            <person name="Hempel S."/>
            <person name="Feldpausch M."/>
            <person name="Lamberth S."/>
            <person name="Van den Daele H."/>
            <person name="De Keyser A."/>
            <person name="Buysshaert C."/>
            <person name="Gielen J."/>
            <person name="Villarroel R."/>
            <person name="De Clercq R."/>
            <person name="van Montagu M."/>
            <person name="Rogers J."/>
            <person name="Cronin A."/>
            <person name="Quail M.A."/>
            <person name="Bray-Allen S."/>
            <person name="Clark L."/>
            <person name="Doggett J."/>
            <person name="Hall S."/>
            <person name="Kay M."/>
            <person name="Lennard N."/>
            <person name="McLay K."/>
            <person name="Mayes R."/>
            <person name="Pettett A."/>
            <person name="Rajandream M.A."/>
            <person name="Lyne M."/>
            <person name="Benes V."/>
            <person name="Rechmann S."/>
            <person name="Borkova D."/>
            <person name="Bloecker H."/>
            <person name="Scharfe M."/>
            <person name="Grimm M."/>
            <person name="Loehnert T.-H."/>
            <person name="Dose S."/>
            <person name="de Haan M."/>
            <person name="Maarse A.C."/>
            <person name="Schaefer M."/>
            <person name="Mueller-Auer S."/>
            <person name="Gabel C."/>
            <person name="Fuchs M."/>
            <person name="Fartmann B."/>
            <person name="Granderath K."/>
            <person name="Dauner D."/>
            <person name="Herzl A."/>
            <person name="Neumann S."/>
            <person name="Argiriou A."/>
            <person name="Vitale D."/>
            <person name="Liguori R."/>
            <person name="Piravandi E."/>
            <person name="Massenet O."/>
            <person name="Quigley F."/>
            <person name="Clabauld G."/>
            <person name="Muendlein A."/>
            <person name="Felber R."/>
            <person name="Schnabl S."/>
            <person name="Hiller R."/>
            <person name="Schmidt W."/>
            <person name="Lecharny A."/>
            <person name="Aubourg S."/>
            <person name="Chefdor F."/>
            <person name="Cooke R."/>
            <person name="Berger C."/>
            <person name="Monfort A."/>
            <person name="Casacuberta E."/>
            <person name="Gibbons T."/>
            <person name="Weber N."/>
            <person name="Vandenbol M."/>
            <person name="Bargues M."/>
            <person name="Terol J."/>
            <person name="Torres A."/>
            <person name="Perez-Perez A."/>
            <person name="Purnelle B."/>
            <person name="Bent E."/>
            <person name="Johnson S."/>
            <person name="Tacon D."/>
            <person name="Jesse T."/>
            <person name="Heijnen L."/>
            <person name="Schwarz S."/>
            <person name="Scholler P."/>
            <person name="Heber S."/>
            <person name="Francs P."/>
            <person name="Bielke C."/>
            <person name="Frishman D."/>
            <person name="Haase D."/>
            <person name="Lemcke K."/>
            <person name="Mewes H.-W."/>
            <person name="Stocker S."/>
            <person name="Zaccaria P."/>
            <person name="Bevan M."/>
            <person name="Wilson R.K."/>
            <person name="de la Bastide M."/>
            <person name="Habermann K."/>
            <person name="Parnell L."/>
            <person name="Dedhia N."/>
            <person name="Gnoj L."/>
            <person name="Schutz K."/>
            <person name="Huang E."/>
            <person name="Spiegel L."/>
            <person name="Sekhon M."/>
            <person name="Murray J."/>
            <person name="Sheet P."/>
            <person name="Cordes M."/>
            <person name="Abu-Threideh J."/>
            <person name="Stoneking T."/>
            <person name="Kalicki J."/>
            <person name="Graves T."/>
            <person name="Harmon G."/>
            <person name="Edwards J."/>
            <person name="Latreille P."/>
            <person name="Courtney L."/>
            <person name="Cloud J."/>
            <person name="Abbott A."/>
            <person name="Scott K."/>
            <person name="Johnson D."/>
            <person name="Minx P."/>
            <person name="Bentley D."/>
            <person name="Fulton B."/>
            <person name="Miller N."/>
            <person name="Greco T."/>
            <person name="Kemp K."/>
            <person name="Kramer J."/>
            <person name="Fulton L."/>
            <person name="Mardis E."/>
            <person name="Dante M."/>
            <person name="Pepin K."/>
            <person name="Hillier L.W."/>
            <person name="Nelson J."/>
            <person name="Spieth J."/>
            <person name="Ryan E."/>
            <person name="Andrews S."/>
            <person name="Geisel C."/>
            <person name="Layman D."/>
            <person name="Du H."/>
            <person name="Ali J."/>
            <person name="Berghoff A."/>
            <person name="Jones K."/>
            <person name="Drone K."/>
            <person name="Cotton M."/>
            <person name="Joshu C."/>
            <person name="Antonoiu B."/>
            <person name="Zidanic M."/>
            <person name="Strong C."/>
            <person name="Sun H."/>
            <person name="Lamar B."/>
            <person name="Yordan C."/>
            <person name="Ma P."/>
            <person name="Zhong J."/>
            <person name="Preston R."/>
            <person name="Vil D."/>
            <person name="Shekher M."/>
            <person name="Matero A."/>
            <person name="Shah R."/>
            <person name="Swaby I.K."/>
            <person name="O'Shaughnessy A."/>
            <person name="Rodriguez M."/>
            <person name="Hoffman J."/>
            <person name="Till S."/>
            <person name="Granat S."/>
            <person name="Shohdy N."/>
            <person name="Hasegawa A."/>
            <person name="Hameed A."/>
            <person name="Lodhi M."/>
            <person name="Johnson A."/>
            <person name="Chen E."/>
            <person name="Marra M.A."/>
            <person name="Martienssen R."/>
            <person name="McCombie W.R."/>
        </authorList>
    </citation>
    <scope>NUCLEOTIDE SEQUENCE [LARGE SCALE GENOMIC DNA]</scope>
    <source>
        <strain>cv. Columbia</strain>
    </source>
</reference>
<reference key="2">
    <citation type="journal article" date="2017" name="Plant J.">
        <title>Araport11: a complete reannotation of the Arabidopsis thaliana reference genome.</title>
        <authorList>
            <person name="Cheng C.Y."/>
            <person name="Krishnakumar V."/>
            <person name="Chan A.P."/>
            <person name="Thibaud-Nissen F."/>
            <person name="Schobel S."/>
            <person name="Town C.D."/>
        </authorList>
    </citation>
    <scope>GENOME REANNOTATION</scope>
    <source>
        <strain>cv. Columbia</strain>
    </source>
</reference>
<dbReference type="EMBL" id="AL021961">
    <property type="protein sequence ID" value="CAA17555.1"/>
    <property type="molecule type" value="Genomic_DNA"/>
</dbReference>
<dbReference type="EMBL" id="AL161585">
    <property type="protein sequence ID" value="CAB80134.1"/>
    <property type="molecule type" value="Genomic_DNA"/>
</dbReference>
<dbReference type="EMBL" id="CP002687">
    <property type="protein sequence ID" value="AEE86336.1"/>
    <property type="molecule type" value="Genomic_DNA"/>
</dbReference>
<dbReference type="PIR" id="T05419">
    <property type="entry name" value="T05419"/>
</dbReference>
<dbReference type="RefSeq" id="NP_195143.1">
    <property type="nucleotide sequence ID" value="NM_119580.1"/>
</dbReference>
<dbReference type="SMR" id="O49488"/>
<dbReference type="PaxDb" id="3702-AT4G34170.1"/>
<dbReference type="EnsemblPlants" id="AT4G34170.1">
    <property type="protein sequence ID" value="AT4G34170.1"/>
    <property type="gene ID" value="AT4G34170"/>
</dbReference>
<dbReference type="GeneID" id="829565"/>
<dbReference type="Gramene" id="AT4G34170.1">
    <property type="protein sequence ID" value="AT4G34170.1"/>
    <property type="gene ID" value="AT4G34170"/>
</dbReference>
<dbReference type="KEGG" id="ath:AT4G34170"/>
<dbReference type="Araport" id="AT4G34170"/>
<dbReference type="TAIR" id="AT4G34170"/>
<dbReference type="eggNOG" id="KOG1072">
    <property type="taxonomic scope" value="Eukaryota"/>
</dbReference>
<dbReference type="HOGENOM" id="CLU_032521_1_2_1"/>
<dbReference type="InParanoid" id="O49488"/>
<dbReference type="PhylomeDB" id="O49488"/>
<dbReference type="PRO" id="PR:O49488"/>
<dbReference type="Proteomes" id="UP000006548">
    <property type="component" value="Chromosome 4"/>
</dbReference>
<dbReference type="ExpressionAtlas" id="O49488">
    <property type="expression patterns" value="baseline and differential"/>
</dbReference>
<dbReference type="CDD" id="cd22152">
    <property type="entry name" value="F-box_AtAFR-like"/>
    <property type="match status" value="1"/>
</dbReference>
<dbReference type="Gene3D" id="2.120.10.80">
    <property type="entry name" value="Kelch-type beta propeller"/>
    <property type="match status" value="1"/>
</dbReference>
<dbReference type="InterPro" id="IPR036047">
    <property type="entry name" value="F-box-like_dom_sf"/>
</dbReference>
<dbReference type="InterPro" id="IPR050354">
    <property type="entry name" value="F-box/kelch-repeat_ARATH"/>
</dbReference>
<dbReference type="InterPro" id="IPR001810">
    <property type="entry name" value="F-box_dom"/>
</dbReference>
<dbReference type="InterPro" id="IPR015915">
    <property type="entry name" value="Kelch-typ_b-propeller"/>
</dbReference>
<dbReference type="InterPro" id="IPR006652">
    <property type="entry name" value="Kelch_1"/>
</dbReference>
<dbReference type="PANTHER" id="PTHR24414">
    <property type="entry name" value="F-BOX/KELCH-REPEAT PROTEIN SKIP4"/>
    <property type="match status" value="1"/>
</dbReference>
<dbReference type="PANTHER" id="PTHR24414:SF184">
    <property type="entry name" value="GALACTOSE OXIDASE_KELCH REPEAT SUPERFAMILY PROTEIN"/>
    <property type="match status" value="1"/>
</dbReference>
<dbReference type="Pfam" id="PF00646">
    <property type="entry name" value="F-box"/>
    <property type="match status" value="1"/>
</dbReference>
<dbReference type="Pfam" id="PF25210">
    <property type="entry name" value="Kelch_FKB95"/>
    <property type="match status" value="1"/>
</dbReference>
<dbReference type="SMART" id="SM00612">
    <property type="entry name" value="Kelch"/>
    <property type="match status" value="2"/>
</dbReference>
<dbReference type="SUPFAM" id="SSF81383">
    <property type="entry name" value="F-box domain"/>
    <property type="match status" value="1"/>
</dbReference>
<dbReference type="SUPFAM" id="SSF117281">
    <property type="entry name" value="Kelch motif"/>
    <property type="match status" value="1"/>
</dbReference>
<organism>
    <name type="scientific">Arabidopsis thaliana</name>
    <name type="common">Mouse-ear cress</name>
    <dbReference type="NCBI Taxonomy" id="3702"/>
    <lineage>
        <taxon>Eukaryota</taxon>
        <taxon>Viridiplantae</taxon>
        <taxon>Streptophyta</taxon>
        <taxon>Embryophyta</taxon>
        <taxon>Tracheophyta</taxon>
        <taxon>Spermatophyta</taxon>
        <taxon>Magnoliopsida</taxon>
        <taxon>eudicotyledons</taxon>
        <taxon>Gunneridae</taxon>
        <taxon>Pentapetalae</taxon>
        <taxon>rosids</taxon>
        <taxon>malvids</taxon>
        <taxon>Brassicales</taxon>
        <taxon>Brassicaceae</taxon>
        <taxon>Camelineae</taxon>
        <taxon>Arabidopsis</taxon>
    </lineage>
</organism>